<comment type="cofactor">
    <cofactor evidence="1">
        <name>heme</name>
        <dbReference type="ChEBI" id="CHEBI:30413"/>
    </cofactor>
</comment>
<comment type="similarity">
    <text evidence="2">Belongs to the cytochrome P450 family.</text>
</comment>
<proteinExistence type="evidence at protein level"/>
<dbReference type="EC" id="1.14.-.-"/>
<dbReference type="EMBL" id="AL123456">
    <property type="protein sequence ID" value="CCP43525.1"/>
    <property type="molecule type" value="Genomic_DNA"/>
</dbReference>
<dbReference type="PIR" id="E70708">
    <property type="entry name" value="E70708"/>
</dbReference>
<dbReference type="RefSeq" id="NP_215292.1">
    <property type="nucleotide sequence ID" value="NC_000962.3"/>
</dbReference>
<dbReference type="RefSeq" id="WP_003898584.1">
    <property type="nucleotide sequence ID" value="NZ_NVQJ01000035.1"/>
</dbReference>
<dbReference type="PDB" id="5LI6">
    <property type="method" value="X-ray"/>
    <property type="resolution" value="1.95 A"/>
    <property type="chains" value="A/B=1-414"/>
</dbReference>
<dbReference type="PDB" id="5LI7">
    <property type="method" value="X-ray"/>
    <property type="resolution" value="1.58 A"/>
    <property type="chains" value="A/B=1-414"/>
</dbReference>
<dbReference type="PDB" id="5LI8">
    <property type="method" value="X-ray"/>
    <property type="resolution" value="1.83 A"/>
    <property type="chains" value="A=1-414"/>
</dbReference>
<dbReference type="PDB" id="5LIE">
    <property type="method" value="X-ray"/>
    <property type="resolution" value="1.80 A"/>
    <property type="chains" value="A/B=1-414"/>
</dbReference>
<dbReference type="PDBsum" id="5LI6"/>
<dbReference type="PDBsum" id="5LI7"/>
<dbReference type="PDBsum" id="5LI8"/>
<dbReference type="PDBsum" id="5LIE"/>
<dbReference type="SMR" id="P9WPN9"/>
<dbReference type="FunCoup" id="P9WPN9">
    <property type="interactions" value="11"/>
</dbReference>
<dbReference type="STRING" id="83332.Rv0778"/>
<dbReference type="PaxDb" id="83332-Rv0778"/>
<dbReference type="DNASU" id="888913"/>
<dbReference type="GeneID" id="888913"/>
<dbReference type="KEGG" id="mtu:Rv0778"/>
<dbReference type="KEGG" id="mtv:RVBD_0778"/>
<dbReference type="TubercuList" id="Rv0778"/>
<dbReference type="eggNOG" id="COG2124">
    <property type="taxonomic scope" value="Bacteria"/>
</dbReference>
<dbReference type="InParanoid" id="P9WPN9"/>
<dbReference type="OrthoDB" id="5241086at2"/>
<dbReference type="PhylomeDB" id="P9WPN9"/>
<dbReference type="Proteomes" id="UP000001584">
    <property type="component" value="Chromosome"/>
</dbReference>
<dbReference type="GO" id="GO:0036199">
    <property type="term" value="F:cholest-4-en-3-one 26-monooxygenase activity"/>
    <property type="evidence" value="ECO:0000318"/>
    <property type="project" value="GO_Central"/>
</dbReference>
<dbReference type="GO" id="GO:0020037">
    <property type="term" value="F:heme binding"/>
    <property type="evidence" value="ECO:0000318"/>
    <property type="project" value="GO_Central"/>
</dbReference>
<dbReference type="GO" id="GO:0005506">
    <property type="term" value="F:iron ion binding"/>
    <property type="evidence" value="ECO:0007669"/>
    <property type="project" value="InterPro"/>
</dbReference>
<dbReference type="GO" id="GO:0008395">
    <property type="term" value="F:steroid hydroxylase activity"/>
    <property type="evidence" value="ECO:0000318"/>
    <property type="project" value="GO_Central"/>
</dbReference>
<dbReference type="GO" id="GO:0006707">
    <property type="term" value="P:cholesterol catabolic process"/>
    <property type="evidence" value="ECO:0000318"/>
    <property type="project" value="GO_Central"/>
</dbReference>
<dbReference type="CDD" id="cd11033">
    <property type="entry name" value="CYP142-like"/>
    <property type="match status" value="1"/>
</dbReference>
<dbReference type="FunFam" id="1.10.630.10:FF:000018">
    <property type="entry name" value="Cytochrome P450 monooxygenase"/>
    <property type="match status" value="1"/>
</dbReference>
<dbReference type="Gene3D" id="1.10.630.10">
    <property type="entry name" value="Cytochrome P450"/>
    <property type="match status" value="1"/>
</dbReference>
<dbReference type="InterPro" id="IPR001128">
    <property type="entry name" value="Cyt_P450"/>
</dbReference>
<dbReference type="InterPro" id="IPR002397">
    <property type="entry name" value="Cyt_P450_B"/>
</dbReference>
<dbReference type="InterPro" id="IPR017972">
    <property type="entry name" value="Cyt_P450_CS"/>
</dbReference>
<dbReference type="InterPro" id="IPR036396">
    <property type="entry name" value="Cyt_P450_sf"/>
</dbReference>
<dbReference type="PANTHER" id="PTHR46696:SF4">
    <property type="entry name" value="BIOTIN BIOSYNTHESIS CYTOCHROME P450"/>
    <property type="match status" value="1"/>
</dbReference>
<dbReference type="PANTHER" id="PTHR46696">
    <property type="entry name" value="P450, PUTATIVE (EUROFUNG)-RELATED"/>
    <property type="match status" value="1"/>
</dbReference>
<dbReference type="Pfam" id="PF00067">
    <property type="entry name" value="p450"/>
    <property type="match status" value="1"/>
</dbReference>
<dbReference type="PRINTS" id="PR00359">
    <property type="entry name" value="BP450"/>
</dbReference>
<dbReference type="PRINTS" id="PR00385">
    <property type="entry name" value="P450"/>
</dbReference>
<dbReference type="SUPFAM" id="SSF48264">
    <property type="entry name" value="Cytochrome P450"/>
    <property type="match status" value="1"/>
</dbReference>
<dbReference type="PROSITE" id="PS00086">
    <property type="entry name" value="CYTOCHROME_P450"/>
    <property type="match status" value="1"/>
</dbReference>
<feature type="chain" id="PRO_0000052282" description="Putative cytochrome P450 126">
    <location>
        <begin position="1"/>
        <end position="414"/>
    </location>
</feature>
<feature type="binding site" description="axial binding residue" evidence="1">
    <location>
        <position position="363"/>
    </location>
    <ligand>
        <name>heme</name>
        <dbReference type="ChEBI" id="CHEBI:30413"/>
    </ligand>
    <ligandPart>
        <name>Fe</name>
        <dbReference type="ChEBI" id="CHEBI:18248"/>
    </ligandPart>
</feature>
<keyword id="KW-0002">3D-structure</keyword>
<keyword id="KW-0349">Heme</keyword>
<keyword id="KW-0408">Iron</keyword>
<keyword id="KW-0479">Metal-binding</keyword>
<keyword id="KW-0503">Monooxygenase</keyword>
<keyword id="KW-0560">Oxidoreductase</keyword>
<keyword id="KW-1185">Reference proteome</keyword>
<evidence type="ECO:0000250" key="1"/>
<evidence type="ECO:0000305" key="2"/>
<name>CP126_MYCTU</name>
<organism>
    <name type="scientific">Mycobacterium tuberculosis (strain ATCC 25618 / H37Rv)</name>
    <dbReference type="NCBI Taxonomy" id="83332"/>
    <lineage>
        <taxon>Bacteria</taxon>
        <taxon>Bacillati</taxon>
        <taxon>Actinomycetota</taxon>
        <taxon>Actinomycetes</taxon>
        <taxon>Mycobacteriales</taxon>
        <taxon>Mycobacteriaceae</taxon>
        <taxon>Mycobacterium</taxon>
        <taxon>Mycobacterium tuberculosis complex</taxon>
    </lineage>
</organism>
<accession>P9WPN9</accession>
<accession>L0T4P8</accession>
<accession>P63711</accession>
<accession>P77903</accession>
<protein>
    <recommendedName>
        <fullName>Putative cytochrome P450 126</fullName>
        <ecNumber>1.14.-.-</ecNumber>
    </recommendedName>
</protein>
<gene>
    <name type="primary">cyp126</name>
    <name type="ordered locus">Rv0778</name>
    <name type="ORF">MTCY369.22</name>
</gene>
<reference key="1">
    <citation type="journal article" date="1998" name="Nature">
        <title>Deciphering the biology of Mycobacterium tuberculosis from the complete genome sequence.</title>
        <authorList>
            <person name="Cole S.T."/>
            <person name="Brosch R."/>
            <person name="Parkhill J."/>
            <person name="Garnier T."/>
            <person name="Churcher C.M."/>
            <person name="Harris D.E."/>
            <person name="Gordon S.V."/>
            <person name="Eiglmeier K."/>
            <person name="Gas S."/>
            <person name="Barry C.E. III"/>
            <person name="Tekaia F."/>
            <person name="Badcock K."/>
            <person name="Basham D."/>
            <person name="Brown D."/>
            <person name="Chillingworth T."/>
            <person name="Connor R."/>
            <person name="Davies R.M."/>
            <person name="Devlin K."/>
            <person name="Feltwell T."/>
            <person name="Gentles S."/>
            <person name="Hamlin N."/>
            <person name="Holroyd S."/>
            <person name="Hornsby T."/>
            <person name="Jagels K."/>
            <person name="Krogh A."/>
            <person name="McLean J."/>
            <person name="Moule S."/>
            <person name="Murphy L.D."/>
            <person name="Oliver S."/>
            <person name="Osborne J."/>
            <person name="Quail M.A."/>
            <person name="Rajandream M.A."/>
            <person name="Rogers J."/>
            <person name="Rutter S."/>
            <person name="Seeger K."/>
            <person name="Skelton S."/>
            <person name="Squares S."/>
            <person name="Squares R."/>
            <person name="Sulston J.E."/>
            <person name="Taylor K."/>
            <person name="Whitehead S."/>
            <person name="Barrell B.G."/>
        </authorList>
    </citation>
    <scope>NUCLEOTIDE SEQUENCE [LARGE SCALE GENOMIC DNA]</scope>
    <source>
        <strain>ATCC 25618 / H37Rv</strain>
    </source>
</reference>
<reference key="2">
    <citation type="journal article" date="2011" name="Mol. Cell. Proteomics">
        <title>Proteogenomic analysis of Mycobacterium tuberculosis by high resolution mass spectrometry.</title>
        <authorList>
            <person name="Kelkar D.S."/>
            <person name="Kumar D."/>
            <person name="Kumar P."/>
            <person name="Balakrishnan L."/>
            <person name="Muthusamy B."/>
            <person name="Yadav A.K."/>
            <person name="Shrivastava P."/>
            <person name="Marimuthu A."/>
            <person name="Anand S."/>
            <person name="Sundaram H."/>
            <person name="Kingsbury R."/>
            <person name="Harsha H.C."/>
            <person name="Nair B."/>
            <person name="Prasad T.S."/>
            <person name="Chauhan D.S."/>
            <person name="Katoch K."/>
            <person name="Katoch V.M."/>
            <person name="Kumar P."/>
            <person name="Chaerkady R."/>
            <person name="Ramachandran S."/>
            <person name="Dash D."/>
            <person name="Pandey A."/>
        </authorList>
    </citation>
    <scope>IDENTIFICATION BY MASS SPECTROMETRY [LARGE SCALE ANALYSIS]</scope>
    <source>
        <strain>ATCC 25618 / H37Rv</strain>
    </source>
</reference>
<sequence>MTTAAGLSGIDLTDLDNFADGFPHHLFAIHRREAPVYWHRPTEHTPDGEGFWSVATYAETLEVLRDPVTYSSVTGGQRRFGGTVLQDLPVAGQVLNMMDDPRHTRIRRLVSSGLTPRMIRRVEDDLRRRARGLLDGVEPGAPFDFVVEIAAELPMQMICILLGVPETDRHWLFEAVEPGFDFRGSRRATMPRLNVEDAGSRLYTYALELIAGKRAEPADDMLSVVANATIDDPDAPALSDAELYLFFHLLFSAGAETTRNSIAGGLLALAENPDQLQTLRSDFELLPTAIEEIVRWTSPSPSKRRTASRAVSLGGQPIEAGQKVVVWEGSANRDPSVFDRADEFDITRKPNPHLGFGQGVHYCLGANLARLELRVLFEELLSRFGSVRVVEPAEWTRSNRHTGIRHLVVELRGG</sequence>